<protein>
    <recommendedName>
        <fullName>Replication-associated protein</fullName>
        <shortName>Rep</shortName>
    </recommendedName>
</protein>
<sequence length="474" mass="53333">MFLAAIHVITFFISENSKSFYTMSTPTSAFNAMLDDIGIEIQDDISALCSTLADPSDAEPAPPVHDVDDLLASVGPDKRKKIRSGLLTIHPPSSHPSWLKPETWFPQCDDILEIWCAKFEKGEDTGNLHVHIYFKLKHSNTIRFELLQKWITKHVTGFDFKPQRSATKNSTQCVVNYVLKPETSVGDPFIWNASCAFDQKTWDARHKGKGKKQEIIDHIMARDWTLSWASLVHESDESRALLADCGWGKRFQEDRAAAQPRRKIKDVVILYGAAGTGKTTMAMDWDSKPDETTKARYYRRSCDEDFWGGGATAYNGQRVIHYDEFGGQEKFASLKEITSIGLPGPPVKVKGSGRDLNHDTVVFTSNVHPAGWYKGVWAKDPHQFKPFQRRVTKVLFFPRERPDGTENVPSDGNPAHFVDQTPEWVAFGDNLDLAIEHAESCWPLPATIEDDGGGAFAPGFSLTSEPEPKRRRFF</sequence>
<organism>
    <name type="scientific">Avon-Heathcote Estuary associated kieseladnavirus</name>
    <name type="common">AHEaBV</name>
    <name type="synonym">Avon-Heathcote Estuary associated bacilladnavirus</name>
    <dbReference type="NCBI Taxonomy" id="3052270"/>
    <lineage>
        <taxon>Viruses</taxon>
        <taxon>Monodnaviria</taxon>
        <taxon>Shotokuvirae</taxon>
        <taxon>Cressdnaviricota</taxon>
        <taxon>Arfiviricetes</taxon>
        <taxon>Baphyvirales</taxon>
        <taxon>Bacilladnaviridae</taxon>
        <taxon>Kieseladnavirus</taxon>
    </lineage>
</organism>
<evidence type="ECO:0000255" key="1">
    <source>
        <dbReference type="PROSITE-ProRule" id="PRU00768"/>
    </source>
</evidence>
<evidence type="ECO:0000256" key="2">
    <source>
        <dbReference type="SAM" id="MobiDB-lite"/>
    </source>
</evidence>
<evidence type="ECO:0000305" key="3"/>
<dbReference type="EMBL" id="KY405008">
    <property type="protein sequence ID" value="AQA27298.1"/>
    <property type="molecule type" value="Genomic_DNA"/>
</dbReference>
<dbReference type="RefSeq" id="YP_009345097.1">
    <property type="nucleotide sequence ID" value="NC_033744.1"/>
</dbReference>
<dbReference type="GeneID" id="30999667"/>
<dbReference type="KEGG" id="vg:30999667"/>
<dbReference type="Proteomes" id="UP000214340">
    <property type="component" value="Segment"/>
</dbReference>
<dbReference type="GO" id="GO:0042025">
    <property type="term" value="C:host cell nucleus"/>
    <property type="evidence" value="ECO:0007669"/>
    <property type="project" value="UniProtKB-SubCell"/>
</dbReference>
<dbReference type="GO" id="GO:0003723">
    <property type="term" value="F:RNA binding"/>
    <property type="evidence" value="ECO:0007669"/>
    <property type="project" value="InterPro"/>
</dbReference>
<dbReference type="GO" id="GO:0003724">
    <property type="term" value="F:RNA helicase activity"/>
    <property type="evidence" value="ECO:0007669"/>
    <property type="project" value="InterPro"/>
</dbReference>
<dbReference type="Gene3D" id="3.40.1310.20">
    <property type="match status" value="1"/>
</dbReference>
<dbReference type="InterPro" id="IPR000605">
    <property type="entry name" value="Helicase_SF3_ssDNA/RNA_vir"/>
</dbReference>
<dbReference type="Pfam" id="PF00910">
    <property type="entry name" value="RNA_helicase"/>
    <property type="match status" value="1"/>
</dbReference>
<comment type="function">
    <text evidence="3">Plays an essential for the replication of viral DNA. Presumably cleaves viral genomic dsRNA replicative form to initiate rolling circle replication.</text>
</comment>
<comment type="subcellular location">
    <subcellularLocation>
        <location evidence="3">Host nucleus</location>
    </subcellularLocation>
</comment>
<feature type="chain" id="PRO_0000445651" description="Replication-associated protein">
    <location>
        <begin position="1"/>
        <end position="474"/>
    </location>
</feature>
<feature type="region of interest" description="Disordered" evidence="2">
    <location>
        <begin position="455"/>
        <end position="474"/>
    </location>
</feature>
<feature type="short sequence motif" description="Nuclear localization signal" evidence="1">
    <location>
        <begin position="248"/>
        <end position="255"/>
    </location>
</feature>
<reference key="1">
    <citation type="journal article" date="2017" name="Virology">
        <title>Evolutionary history of ssDNA bacilladnaviruses features horizontal acquisition of the capsid gene from ssRNA nodaviruses.</title>
        <authorList>
            <person name="Kazlauskas D."/>
            <person name="Dayaram A."/>
            <person name="Kraberger S."/>
            <person name="Goldstien S."/>
            <person name="Varsani A."/>
            <person name="Krupovic M."/>
        </authorList>
    </citation>
    <scope>NUCLEOTIDE SEQUENCE [LARGE SCALE GENOMIC DNA]</scope>
    <source>
        <strain>AHEaBavV1</strain>
    </source>
</reference>
<proteinExistence type="predicted"/>
<name>REP_AHEBV</name>
<accession>A0A1P8YT89</accession>
<keyword id="KW-1048">Host nucleus</keyword>
<keyword id="KW-1185">Reference proteome</keyword>